<comment type="function">
    <text evidence="1">Hydrolyzes diadenosine 5',5'''-P1,P4-tetraphosphate to yield ADP.</text>
</comment>
<comment type="catalytic activity">
    <reaction>
        <text>P(1),P(4)-bis(5'-adenosyl) tetraphosphate + H2O = 2 ADP + 2 H(+)</text>
        <dbReference type="Rhea" id="RHEA:24252"/>
        <dbReference type="ChEBI" id="CHEBI:15377"/>
        <dbReference type="ChEBI" id="CHEBI:15378"/>
        <dbReference type="ChEBI" id="CHEBI:58141"/>
        <dbReference type="ChEBI" id="CHEBI:456216"/>
        <dbReference type="EC" id="3.6.1.41"/>
    </reaction>
</comment>
<comment type="similarity">
    <text evidence="2">Belongs to the Ap4A hydrolase family.</text>
</comment>
<keyword id="KW-0378">Hydrolase</keyword>
<organism>
    <name type="scientific">Aggregatibacter actinomycetemcomitans</name>
    <name type="common">Actinobacillus actinomycetemcomitans</name>
    <name type="synonym">Haemophilus actinomycetemcomitans</name>
    <dbReference type="NCBI Taxonomy" id="714"/>
    <lineage>
        <taxon>Bacteria</taxon>
        <taxon>Pseudomonadati</taxon>
        <taxon>Pseudomonadota</taxon>
        <taxon>Gammaproteobacteria</taxon>
        <taxon>Pasteurellales</taxon>
        <taxon>Pasteurellaceae</taxon>
        <taxon>Aggregatibacter</taxon>
    </lineage>
</organism>
<gene>
    <name type="primary">apaH</name>
</gene>
<sequence>MATYLIGDLHGCYDEFQMLLERVRFDPAQDTLYLTGDLLARGDNSLACLRLVKSLGNAARTVLANHDLHFISTALGVKKIKPRDRVDAIFAAEDFFELVNWLRCQPLLIHNPAQNFVLVHAGISPDWDLTAAKVCANEVENVLRHGNYRYLVENMYAEQPDRWSPHLQGLDRLRYSINVLTRMRFCYLDHRLDFACKLSIKDAPKALAPWFALDNPLYQTGNIVFGHWASLVDETTPPNIYGLDTGCVWGNRLTMLRWEDKQYFTQSAVKKSNAF</sequence>
<feature type="chain" id="PRO_0000197977" description="Bis(5'-nucleosyl)-tetraphosphatase, symmetrical">
    <location>
        <begin position="1"/>
        <end position="275"/>
    </location>
</feature>
<name>APAH_AGGAC</name>
<protein>
    <recommendedName>
        <fullName>Bis(5'-nucleosyl)-tetraphosphatase, symmetrical</fullName>
        <ecNumber>3.6.1.41</ecNumber>
    </recommendedName>
    <alternativeName>
        <fullName>Ap4A hydrolase</fullName>
    </alternativeName>
    <alternativeName>
        <fullName>Diadenosine 5',5'''-P1,P4-tetraphosphate pyrophosphohydrolase</fullName>
    </alternativeName>
    <alternativeName>
        <fullName>Diadenosine tetraphosphatase</fullName>
    </alternativeName>
</protein>
<accession>O52655</accession>
<reference key="1">
    <citation type="submission" date="1998-01" db="EMBL/GenBank/DDBJ databases">
        <authorList>
            <person name="Saarela M."/>
            <person name="Fives-Taylor P."/>
        </authorList>
    </citation>
    <scope>NUCLEOTIDE SEQUENCE [GENOMIC DNA]</scope>
    <source>
        <strain>ATCC 43718 / FDC Y4 / Serotype b</strain>
    </source>
</reference>
<proteinExistence type="inferred from homology"/>
<evidence type="ECO:0000250" key="1"/>
<evidence type="ECO:0000305" key="2"/>
<dbReference type="EC" id="3.6.1.41"/>
<dbReference type="EMBL" id="AF043998">
    <property type="protein sequence ID" value="AAC00202.1"/>
    <property type="molecule type" value="Genomic_DNA"/>
</dbReference>
<dbReference type="SMR" id="O52655"/>
<dbReference type="STRING" id="714.ACT75_05605"/>
<dbReference type="eggNOG" id="COG0639">
    <property type="taxonomic scope" value="Bacteria"/>
</dbReference>
<dbReference type="GO" id="GO:0008803">
    <property type="term" value="F:bis(5'-nucleosyl)-tetraphosphatase (symmetrical) activity"/>
    <property type="evidence" value="ECO:0007669"/>
    <property type="project" value="UniProtKB-UniRule"/>
</dbReference>
<dbReference type="CDD" id="cd07422">
    <property type="entry name" value="MPP_ApaH"/>
    <property type="match status" value="1"/>
</dbReference>
<dbReference type="Gene3D" id="3.60.21.10">
    <property type="match status" value="1"/>
</dbReference>
<dbReference type="HAMAP" id="MF_00199">
    <property type="entry name" value="ApaH"/>
    <property type="match status" value="1"/>
</dbReference>
<dbReference type="InterPro" id="IPR004617">
    <property type="entry name" value="ApaH"/>
</dbReference>
<dbReference type="InterPro" id="IPR004843">
    <property type="entry name" value="Calcineurin-like_PHP_ApaH"/>
</dbReference>
<dbReference type="InterPro" id="IPR029052">
    <property type="entry name" value="Metallo-depent_PP-like"/>
</dbReference>
<dbReference type="NCBIfam" id="TIGR00668">
    <property type="entry name" value="apaH"/>
    <property type="match status" value="1"/>
</dbReference>
<dbReference type="NCBIfam" id="NF001204">
    <property type="entry name" value="PRK00166.1"/>
    <property type="match status" value="1"/>
</dbReference>
<dbReference type="PANTHER" id="PTHR40942">
    <property type="match status" value="1"/>
</dbReference>
<dbReference type="PANTHER" id="PTHR40942:SF4">
    <property type="entry name" value="CYTOCHROME C5"/>
    <property type="match status" value="1"/>
</dbReference>
<dbReference type="Pfam" id="PF00149">
    <property type="entry name" value="Metallophos"/>
    <property type="match status" value="1"/>
</dbReference>
<dbReference type="PIRSF" id="PIRSF000903">
    <property type="entry name" value="B5n-ttraPtase_sm"/>
    <property type="match status" value="1"/>
</dbReference>
<dbReference type="SUPFAM" id="SSF56300">
    <property type="entry name" value="Metallo-dependent phosphatases"/>
    <property type="match status" value="1"/>
</dbReference>